<evidence type="ECO:0000255" key="1">
    <source>
        <dbReference type="HAMAP-Rule" id="MF_01394"/>
    </source>
</evidence>
<keyword id="KW-0997">Cell inner membrane</keyword>
<keyword id="KW-1003">Cell membrane</keyword>
<keyword id="KW-0472">Membrane</keyword>
<keyword id="KW-0520">NAD</keyword>
<keyword id="KW-0874">Quinone</keyword>
<keyword id="KW-1185">Reference proteome</keyword>
<keyword id="KW-1278">Translocase</keyword>
<keyword id="KW-0812">Transmembrane</keyword>
<keyword id="KW-1133">Transmembrane helix</keyword>
<keyword id="KW-0813">Transport</keyword>
<sequence>MNNKYAEYLPIAIQLMVTLGFISVTLLSSWLLGPKVKSKKKLDAFESGLDPVGNARVQFSIKYFLVATLFVLFDVEVIFFYPWAVNFNYFAEAVNKWEGFVKMLLFMTSLLIGFIYVIKKKALDWE</sequence>
<comment type="function">
    <text evidence="1">NDH-1 shuttles electrons from NADH, via FMN and iron-sulfur (Fe-S) centers, to quinones in the respiratory chain. The immediate electron acceptor for the enzyme in this species is believed to be a menaquinone. Couples the redox reaction to proton translocation (for every two electrons transferred, four hydrogen ions are translocated across the cytoplasmic membrane), and thus conserves the redox energy in a proton gradient.</text>
</comment>
<comment type="catalytic activity">
    <reaction evidence="1">
        <text>a quinone + NADH + 5 H(+)(in) = a quinol + NAD(+) + 4 H(+)(out)</text>
        <dbReference type="Rhea" id="RHEA:57888"/>
        <dbReference type="ChEBI" id="CHEBI:15378"/>
        <dbReference type="ChEBI" id="CHEBI:24646"/>
        <dbReference type="ChEBI" id="CHEBI:57540"/>
        <dbReference type="ChEBI" id="CHEBI:57945"/>
        <dbReference type="ChEBI" id="CHEBI:132124"/>
    </reaction>
</comment>
<comment type="subunit">
    <text evidence="1">NDH-1 is composed of 14 different subunits. Subunits NuoA, H, J, K, L, M, N constitute the membrane sector of the complex.</text>
</comment>
<comment type="subcellular location">
    <subcellularLocation>
        <location evidence="1">Cell inner membrane</location>
        <topology evidence="1">Multi-pass membrane protein</topology>
    </subcellularLocation>
</comment>
<comment type="similarity">
    <text evidence="1">Belongs to the complex I subunit 3 family.</text>
</comment>
<accession>Q11VB2</accession>
<protein>
    <recommendedName>
        <fullName evidence="1">NADH-quinone oxidoreductase subunit A</fullName>
        <ecNumber evidence="1">7.1.1.-</ecNumber>
    </recommendedName>
    <alternativeName>
        <fullName evidence="1">NADH dehydrogenase I subunit A</fullName>
    </alternativeName>
    <alternativeName>
        <fullName evidence="1">NDH-1 subunit A</fullName>
    </alternativeName>
    <alternativeName>
        <fullName evidence="1">NUO1</fullName>
    </alternativeName>
</protein>
<name>NUOA_CYTH3</name>
<dbReference type="EC" id="7.1.1.-" evidence="1"/>
<dbReference type="EMBL" id="CP000383">
    <property type="protein sequence ID" value="ABG58654.1"/>
    <property type="molecule type" value="Genomic_DNA"/>
</dbReference>
<dbReference type="RefSeq" id="WP_011584769.1">
    <property type="nucleotide sequence ID" value="NC_008255.1"/>
</dbReference>
<dbReference type="SMR" id="Q11VB2"/>
<dbReference type="STRING" id="269798.CHU_1382"/>
<dbReference type="KEGG" id="chu:CHU_1382"/>
<dbReference type="eggNOG" id="COG0838">
    <property type="taxonomic scope" value="Bacteria"/>
</dbReference>
<dbReference type="HOGENOM" id="CLU_119549_0_2_10"/>
<dbReference type="OrthoDB" id="9791970at2"/>
<dbReference type="Proteomes" id="UP000001822">
    <property type="component" value="Chromosome"/>
</dbReference>
<dbReference type="GO" id="GO:0030964">
    <property type="term" value="C:NADH dehydrogenase complex"/>
    <property type="evidence" value="ECO:0007669"/>
    <property type="project" value="TreeGrafter"/>
</dbReference>
<dbReference type="GO" id="GO:0005886">
    <property type="term" value="C:plasma membrane"/>
    <property type="evidence" value="ECO:0007669"/>
    <property type="project" value="UniProtKB-SubCell"/>
</dbReference>
<dbReference type="GO" id="GO:0008137">
    <property type="term" value="F:NADH dehydrogenase (ubiquinone) activity"/>
    <property type="evidence" value="ECO:0007669"/>
    <property type="project" value="InterPro"/>
</dbReference>
<dbReference type="GO" id="GO:0050136">
    <property type="term" value="F:NADH:ubiquinone reductase (non-electrogenic) activity"/>
    <property type="evidence" value="ECO:0007669"/>
    <property type="project" value="UniProtKB-UniRule"/>
</dbReference>
<dbReference type="GO" id="GO:0048038">
    <property type="term" value="F:quinone binding"/>
    <property type="evidence" value="ECO:0007669"/>
    <property type="project" value="UniProtKB-KW"/>
</dbReference>
<dbReference type="Gene3D" id="1.20.58.1610">
    <property type="entry name" value="NADH:ubiquinone/plastoquinone oxidoreductase, chain 3"/>
    <property type="match status" value="1"/>
</dbReference>
<dbReference type="HAMAP" id="MF_01394">
    <property type="entry name" value="NDH1_NuoA"/>
    <property type="match status" value="1"/>
</dbReference>
<dbReference type="InterPro" id="IPR023043">
    <property type="entry name" value="NAD(P)H_OxRDtase_bac/plastid"/>
</dbReference>
<dbReference type="InterPro" id="IPR000440">
    <property type="entry name" value="NADH_UbQ/plastoQ_OxRdtase_su3"/>
</dbReference>
<dbReference type="InterPro" id="IPR038430">
    <property type="entry name" value="NDAH_ubi_oxred_su3_sf"/>
</dbReference>
<dbReference type="PANTHER" id="PTHR11058:SF22">
    <property type="entry name" value="NADH-QUINONE OXIDOREDUCTASE SUBUNIT A"/>
    <property type="match status" value="1"/>
</dbReference>
<dbReference type="PANTHER" id="PTHR11058">
    <property type="entry name" value="NADH-UBIQUINONE OXIDOREDUCTASE CHAIN 3"/>
    <property type="match status" value="1"/>
</dbReference>
<dbReference type="Pfam" id="PF00507">
    <property type="entry name" value="Oxidored_q4"/>
    <property type="match status" value="1"/>
</dbReference>
<gene>
    <name evidence="1" type="primary">nuoA</name>
    <name type="ordered locus">CHU_1382</name>
</gene>
<organism>
    <name type="scientific">Cytophaga hutchinsonii (strain ATCC 33406 / DSM 1761 / CIP 103989 / NBRC 15051 / NCIMB 9469 / D465)</name>
    <dbReference type="NCBI Taxonomy" id="269798"/>
    <lineage>
        <taxon>Bacteria</taxon>
        <taxon>Pseudomonadati</taxon>
        <taxon>Bacteroidota</taxon>
        <taxon>Cytophagia</taxon>
        <taxon>Cytophagales</taxon>
        <taxon>Cytophagaceae</taxon>
        <taxon>Cytophaga</taxon>
    </lineage>
</organism>
<proteinExistence type="inferred from homology"/>
<reference key="1">
    <citation type="journal article" date="2007" name="Appl. Environ. Microbiol.">
        <title>Genome sequence of the cellulolytic gliding bacterium Cytophaga hutchinsonii.</title>
        <authorList>
            <person name="Xie G."/>
            <person name="Bruce D.C."/>
            <person name="Challacombe J.F."/>
            <person name="Chertkov O."/>
            <person name="Detter J.C."/>
            <person name="Gilna P."/>
            <person name="Han C.S."/>
            <person name="Lucas S."/>
            <person name="Misra M."/>
            <person name="Myers G.L."/>
            <person name="Richardson P."/>
            <person name="Tapia R."/>
            <person name="Thayer N."/>
            <person name="Thompson L.S."/>
            <person name="Brettin T.S."/>
            <person name="Henrissat B."/>
            <person name="Wilson D.B."/>
            <person name="McBride M.J."/>
        </authorList>
    </citation>
    <scope>NUCLEOTIDE SEQUENCE [LARGE SCALE GENOMIC DNA]</scope>
    <source>
        <strain>ATCC 33406 / DSM 1761 / JCM 20678 / CIP 103989 / IAM 12607 / NBRC 15051 / NCIMB 9469 / D465</strain>
    </source>
</reference>
<feature type="chain" id="PRO_0000362670" description="NADH-quinone oxidoreductase subunit A">
    <location>
        <begin position="1"/>
        <end position="126"/>
    </location>
</feature>
<feature type="transmembrane region" description="Helical" evidence="1">
    <location>
        <begin position="11"/>
        <end position="31"/>
    </location>
</feature>
<feature type="transmembrane region" description="Helical" evidence="1">
    <location>
        <begin position="64"/>
        <end position="84"/>
    </location>
</feature>
<feature type="transmembrane region" description="Helical" evidence="1">
    <location>
        <begin position="98"/>
        <end position="118"/>
    </location>
</feature>